<keyword id="KW-0217">Developmental protein</keyword>
<keyword id="KW-1015">Disulfide bond</keyword>
<keyword id="KW-0272">Extracellular matrix</keyword>
<keyword id="KW-0325">Glycoprotein</keyword>
<keyword id="KW-0449">Lipoprotein</keyword>
<keyword id="KW-0964">Secreted</keyword>
<keyword id="KW-0879">Wnt signaling pathway</keyword>
<gene>
    <name type="primary">WNT7B</name>
</gene>
<name>WNT7B_ANSCE</name>
<feature type="chain" id="PRO_0000200651" description="Protein Wnt-7b">
    <location>
        <begin position="1" status="less than"/>
        <end position="123" status="greater than"/>
    </location>
</feature>
<feature type="region of interest" description="Disordered linker" evidence="5">
    <location>
        <begin position="33"/>
        <end position="61"/>
    </location>
</feature>
<feature type="lipid moiety-binding region" description="O-palmitoleoyl serine; by PORCN" evidence="4">
    <location>
        <position position="1"/>
    </location>
</feature>
<feature type="glycosylation site" description="N-linked (GlcNAc...) asparagine" evidence="6">
    <location>
        <position position="90"/>
    </location>
</feature>
<feature type="disulfide bond" evidence="2">
    <location>
        <begin position="89"/>
        <end position="104"/>
    </location>
</feature>
<feature type="non-terminal residue">
    <location>
        <position position="1"/>
    </location>
</feature>
<feature type="non-terminal residue">
    <location>
        <position position="123"/>
    </location>
</feature>
<comment type="function">
    <text evidence="3 5">Ligand for members of the frizzled family of seven transmembrane receptors that functions in the canonical Wnt/beta-catenin signaling pathway (By similarity). Required for normal fusion of the chorion and the allantois during placenta development (By similarity). Required for central nervous system (CNS) angiogenesis and blood-brain barrier regulation (By similarity).</text>
</comment>
<comment type="subcellular location">
    <subcellularLocation>
        <location evidence="5">Secreted</location>
        <location evidence="5">Extracellular space</location>
        <location evidence="5">Extracellular matrix</location>
    </subcellularLocation>
    <subcellularLocation>
        <location evidence="5">Secreted</location>
    </subcellularLocation>
</comment>
<comment type="PTM">
    <text evidence="1 4">Palmitoleoylation is required for efficient binding to frizzled receptors. Depalmitoleoylation leads to Wnt signaling pathway inhibition.</text>
</comment>
<comment type="similarity">
    <text evidence="7">Belongs to the Wnt family.</text>
</comment>
<proteinExistence type="inferred from homology"/>
<evidence type="ECO:0000250" key="1">
    <source>
        <dbReference type="UniProtKB" id="P27467"/>
    </source>
</evidence>
<evidence type="ECO:0000250" key="2">
    <source>
        <dbReference type="UniProtKB" id="P28026"/>
    </source>
</evidence>
<evidence type="ECO:0000250" key="3">
    <source>
        <dbReference type="UniProtKB" id="P28047"/>
    </source>
</evidence>
<evidence type="ECO:0000250" key="4">
    <source>
        <dbReference type="UniProtKB" id="P56704"/>
    </source>
</evidence>
<evidence type="ECO:0000250" key="5">
    <source>
        <dbReference type="UniProtKB" id="P56706"/>
    </source>
</evidence>
<evidence type="ECO:0000255" key="6"/>
<evidence type="ECO:0000305" key="7"/>
<protein>
    <recommendedName>
        <fullName>Protein Wnt-7b</fullName>
    </recommendedName>
</protein>
<reference key="1">
    <citation type="journal article" date="1992" name="Proc. Natl. Acad. Sci. U.S.A.">
        <title>Diversification of the Wnt gene family on the ancestral lineage of vertebrates.</title>
        <authorList>
            <person name="Sidow A."/>
        </authorList>
    </citation>
    <scope>NUCLEOTIDE SEQUENCE [GENOMIC DNA]</scope>
</reference>
<dbReference type="EMBL" id="M91262">
    <property type="protein sequence ID" value="AAA49321.1"/>
    <property type="molecule type" value="Genomic_DNA"/>
</dbReference>
<dbReference type="SMR" id="P28111"/>
<dbReference type="GlyCosmos" id="P28111">
    <property type="glycosylation" value="1 site, No reported glycans"/>
</dbReference>
<dbReference type="GO" id="GO:0005615">
    <property type="term" value="C:extracellular space"/>
    <property type="evidence" value="ECO:0007669"/>
    <property type="project" value="TreeGrafter"/>
</dbReference>
<dbReference type="GO" id="GO:0005125">
    <property type="term" value="F:cytokine activity"/>
    <property type="evidence" value="ECO:0007669"/>
    <property type="project" value="TreeGrafter"/>
</dbReference>
<dbReference type="GO" id="GO:0005109">
    <property type="term" value="F:frizzled binding"/>
    <property type="evidence" value="ECO:0007669"/>
    <property type="project" value="TreeGrafter"/>
</dbReference>
<dbReference type="GO" id="GO:0048513">
    <property type="term" value="P:animal organ development"/>
    <property type="evidence" value="ECO:0007669"/>
    <property type="project" value="UniProtKB-ARBA"/>
</dbReference>
<dbReference type="GO" id="GO:0060070">
    <property type="term" value="P:canonical Wnt signaling pathway"/>
    <property type="evidence" value="ECO:0007669"/>
    <property type="project" value="TreeGrafter"/>
</dbReference>
<dbReference type="GO" id="GO:0045165">
    <property type="term" value="P:cell fate commitment"/>
    <property type="evidence" value="ECO:0007669"/>
    <property type="project" value="TreeGrafter"/>
</dbReference>
<dbReference type="GO" id="GO:0030182">
    <property type="term" value="P:neuron differentiation"/>
    <property type="evidence" value="ECO:0007669"/>
    <property type="project" value="TreeGrafter"/>
</dbReference>
<dbReference type="GO" id="GO:0046330">
    <property type="term" value="P:positive regulation of JNK cascade"/>
    <property type="evidence" value="ECO:0007669"/>
    <property type="project" value="TreeGrafter"/>
</dbReference>
<dbReference type="Gene3D" id="3.30.2460.20">
    <property type="match status" value="1"/>
</dbReference>
<dbReference type="InterPro" id="IPR005817">
    <property type="entry name" value="Wnt"/>
</dbReference>
<dbReference type="InterPro" id="IPR013300">
    <property type="entry name" value="Wnt7"/>
</dbReference>
<dbReference type="InterPro" id="IPR043158">
    <property type="entry name" value="Wnt_C"/>
</dbReference>
<dbReference type="PANTHER" id="PTHR12027:SF73">
    <property type="entry name" value="PROTEIN WNT-7B"/>
    <property type="match status" value="1"/>
</dbReference>
<dbReference type="PANTHER" id="PTHR12027">
    <property type="entry name" value="WNT RELATED"/>
    <property type="match status" value="1"/>
</dbReference>
<dbReference type="Pfam" id="PF00110">
    <property type="entry name" value="wnt"/>
    <property type="match status" value="1"/>
</dbReference>
<dbReference type="PRINTS" id="PR01891">
    <property type="entry name" value="WNT7PROTEIN"/>
</dbReference>
<dbReference type="SMART" id="SM00097">
    <property type="entry name" value="WNT1"/>
    <property type="match status" value="1"/>
</dbReference>
<organism>
    <name type="scientific">Anser caerulescens</name>
    <name type="common">Snow goose</name>
    <name type="synonym">Chen caerulescens</name>
    <dbReference type="NCBI Taxonomy" id="8849"/>
    <lineage>
        <taxon>Eukaryota</taxon>
        <taxon>Metazoa</taxon>
        <taxon>Chordata</taxon>
        <taxon>Craniata</taxon>
        <taxon>Vertebrata</taxon>
        <taxon>Euteleostomi</taxon>
        <taxon>Archelosauria</taxon>
        <taxon>Archosauria</taxon>
        <taxon>Dinosauria</taxon>
        <taxon>Saurischia</taxon>
        <taxon>Theropoda</taxon>
        <taxon>Coelurosauria</taxon>
        <taxon>Aves</taxon>
        <taxon>Neognathae</taxon>
        <taxon>Galloanserae</taxon>
        <taxon>Anseriformes</taxon>
        <taxon>Anatidae</taxon>
        <taxon>Anserinae</taxon>
        <taxon>Anser</taxon>
    </lineage>
</organism>
<sequence>SGSCTTKTCWTTLPKFREIGYILKEKYNAAVQVEVVRASRLRQPTFLKIKQIKSYQKPMETDLVYIEKSPNYCEEDASTGSVGTQGRLCNRTSPNADGCDMMCCGRGYNTHQYTKVWQCNCKF</sequence>
<accession>P28111</accession>